<proteinExistence type="predicted"/>
<dbReference type="EMBL" id="L22036">
    <property type="protein sequence ID" value="AAA25951.1"/>
    <property type="molecule type" value="Genomic_DNA"/>
</dbReference>
<dbReference type="EMBL" id="AE004091">
    <property type="protein sequence ID" value="AAG03799.1"/>
    <property type="molecule type" value="Genomic_DNA"/>
</dbReference>
<dbReference type="PIR" id="S40036">
    <property type="entry name" value="S40036"/>
</dbReference>
<dbReference type="RefSeq" id="NP_249101.1">
    <property type="nucleotide sequence ID" value="NC_002516.2"/>
</dbReference>
<dbReference type="RefSeq" id="WP_003084590.1">
    <property type="nucleotide sequence ID" value="NZ_QZGE01000016.1"/>
</dbReference>
<dbReference type="SMR" id="P43502"/>
<dbReference type="STRING" id="208964.PA0410"/>
<dbReference type="PaxDb" id="208964-PA0410"/>
<dbReference type="DNASU" id="878186"/>
<dbReference type="GeneID" id="878186"/>
<dbReference type="KEGG" id="pae:PA0410"/>
<dbReference type="PATRIC" id="fig|208964.12.peg.431"/>
<dbReference type="PseudoCAP" id="PA0410"/>
<dbReference type="HOGENOM" id="CLU_048995_6_1_6"/>
<dbReference type="InParanoid" id="P43502"/>
<dbReference type="OrthoDB" id="5298045at2"/>
<dbReference type="PhylomeDB" id="P43502"/>
<dbReference type="BioCyc" id="PAER208964:G1FZ6-414-MONOMER"/>
<dbReference type="Proteomes" id="UP000002438">
    <property type="component" value="Chromosome"/>
</dbReference>
<dbReference type="GO" id="GO:0005829">
    <property type="term" value="C:cytosol"/>
    <property type="evidence" value="ECO:0000318"/>
    <property type="project" value="GO_Central"/>
</dbReference>
<dbReference type="GO" id="GO:0006935">
    <property type="term" value="P:chemotaxis"/>
    <property type="evidence" value="ECO:0000318"/>
    <property type="project" value="GO_Central"/>
</dbReference>
<dbReference type="GO" id="GO:0007165">
    <property type="term" value="P:signal transduction"/>
    <property type="evidence" value="ECO:0007669"/>
    <property type="project" value="InterPro"/>
</dbReference>
<dbReference type="CDD" id="cd00732">
    <property type="entry name" value="CheW"/>
    <property type="match status" value="1"/>
</dbReference>
<dbReference type="Gene3D" id="2.40.50.180">
    <property type="entry name" value="CheA-289, Domain 4"/>
    <property type="match status" value="1"/>
</dbReference>
<dbReference type="Gene3D" id="2.30.30.40">
    <property type="entry name" value="SH3 Domains"/>
    <property type="match status" value="1"/>
</dbReference>
<dbReference type="InterPro" id="IPR039315">
    <property type="entry name" value="CheW"/>
</dbReference>
<dbReference type="InterPro" id="IPR036061">
    <property type="entry name" value="CheW-like_dom_sf"/>
</dbReference>
<dbReference type="InterPro" id="IPR002545">
    <property type="entry name" value="CheW-lke_dom"/>
</dbReference>
<dbReference type="PANTHER" id="PTHR22617">
    <property type="entry name" value="CHEMOTAXIS SENSOR HISTIDINE KINASE-RELATED"/>
    <property type="match status" value="1"/>
</dbReference>
<dbReference type="PANTHER" id="PTHR22617:SF43">
    <property type="entry name" value="PROTEIN PILI"/>
    <property type="match status" value="1"/>
</dbReference>
<dbReference type="Pfam" id="PF01584">
    <property type="entry name" value="CheW"/>
    <property type="match status" value="1"/>
</dbReference>
<dbReference type="SMART" id="SM00260">
    <property type="entry name" value="CheW"/>
    <property type="match status" value="1"/>
</dbReference>
<dbReference type="SUPFAM" id="SSF50341">
    <property type="entry name" value="CheW-like"/>
    <property type="match status" value="1"/>
</dbReference>
<dbReference type="PROSITE" id="PS50851">
    <property type="entry name" value="CHEW"/>
    <property type="match status" value="1"/>
</dbReference>
<accession>P43502</accession>
<comment type="function">
    <text>May be a part of a signal-transduction system that regulates twitching motility by controlling pilus function (extension and retraction).</text>
</comment>
<evidence type="ECO:0000255" key="1">
    <source>
        <dbReference type="PROSITE-ProRule" id="PRU00052"/>
    </source>
</evidence>
<name>PILI_PSEAE</name>
<gene>
    <name type="primary">pilI</name>
    <name type="ordered locus">PA0410</name>
</gene>
<organism>
    <name type="scientific">Pseudomonas aeruginosa (strain ATCC 15692 / DSM 22644 / CIP 104116 / JCM 14847 / LMG 12228 / 1C / PRS 101 / PAO1)</name>
    <dbReference type="NCBI Taxonomy" id="208964"/>
    <lineage>
        <taxon>Bacteria</taxon>
        <taxon>Pseudomonadati</taxon>
        <taxon>Pseudomonadota</taxon>
        <taxon>Gammaproteobacteria</taxon>
        <taxon>Pseudomonadales</taxon>
        <taxon>Pseudomonadaceae</taxon>
        <taxon>Pseudomonas</taxon>
    </lineage>
</organism>
<sequence length="178" mass="19934">MSDVQTPFQLLVDIDQRCRRLAAGLPAQQEAVQSWSGIGFRMGGRFFVAPMGEVGEVLHEPRYTQLPGVKTWVKGVANVRGRLLPIMDLCGFLGTELSPLRKQRRVLVVEHLDVFAGLIVDEVFGMQHFPVDTFSEQLPPLEAALQPFIHGVFHREQPWLVFSPHALAQHQGFLDVAV</sequence>
<keyword id="KW-1185">Reference proteome</keyword>
<keyword id="KW-0716">Sensory transduction</keyword>
<protein>
    <recommendedName>
        <fullName>Protein PilI</fullName>
    </recommendedName>
</protein>
<reference key="1">
    <citation type="journal article" date="1994" name="Mol. Microbiol.">
        <title>Characterization of a Pseudomonas aeruginosa gene cluster involved in pilus biosynthesis and twitching motility: sequence similarity to the chemotaxis proteins of enterics and the gliding bacterium Myxococcus xanthus.</title>
        <authorList>
            <person name="Darzins A."/>
        </authorList>
    </citation>
    <scope>NUCLEOTIDE SEQUENCE [GENOMIC DNA]</scope>
    <source>
        <strain>ATCC 15692 / DSM 22644 / CIP 104116 / JCM 14847 / LMG 12228 / 1C / PRS 101 / PAO1</strain>
    </source>
</reference>
<reference key="2">
    <citation type="journal article" date="2000" name="Nature">
        <title>Complete genome sequence of Pseudomonas aeruginosa PAO1, an opportunistic pathogen.</title>
        <authorList>
            <person name="Stover C.K."/>
            <person name="Pham X.-Q.T."/>
            <person name="Erwin A.L."/>
            <person name="Mizoguchi S.D."/>
            <person name="Warrener P."/>
            <person name="Hickey M.J."/>
            <person name="Brinkman F.S.L."/>
            <person name="Hufnagle W.O."/>
            <person name="Kowalik D.J."/>
            <person name="Lagrou M."/>
            <person name="Garber R.L."/>
            <person name="Goltry L."/>
            <person name="Tolentino E."/>
            <person name="Westbrock-Wadman S."/>
            <person name="Yuan Y."/>
            <person name="Brody L.L."/>
            <person name="Coulter S.N."/>
            <person name="Folger K.R."/>
            <person name="Kas A."/>
            <person name="Larbig K."/>
            <person name="Lim R.M."/>
            <person name="Smith K.A."/>
            <person name="Spencer D.H."/>
            <person name="Wong G.K.-S."/>
            <person name="Wu Z."/>
            <person name="Paulsen I.T."/>
            <person name="Reizer J."/>
            <person name="Saier M.H. Jr."/>
            <person name="Hancock R.E.W."/>
            <person name="Lory S."/>
            <person name="Olson M.V."/>
        </authorList>
    </citation>
    <scope>NUCLEOTIDE SEQUENCE [LARGE SCALE GENOMIC DNA]</scope>
    <source>
        <strain>ATCC 15692 / DSM 22644 / CIP 104116 / JCM 14847 / LMG 12228 / 1C / PRS 101 / PAO1</strain>
    </source>
</reference>
<feature type="chain" id="PRO_0000198352" description="Protein PilI">
    <location>
        <begin position="1"/>
        <end position="178"/>
    </location>
</feature>
<feature type="domain" description="CheW-like" evidence="1">
    <location>
        <begin position="34"/>
        <end position="173"/>
    </location>
</feature>